<name>QUEA_ACICJ</name>
<gene>
    <name evidence="1" type="primary">queA</name>
    <name type="ordered locus">Acry_1339</name>
</gene>
<organism>
    <name type="scientific">Acidiphilium cryptum (strain JF-5)</name>
    <dbReference type="NCBI Taxonomy" id="349163"/>
    <lineage>
        <taxon>Bacteria</taxon>
        <taxon>Pseudomonadati</taxon>
        <taxon>Pseudomonadota</taxon>
        <taxon>Alphaproteobacteria</taxon>
        <taxon>Acetobacterales</taxon>
        <taxon>Acidocellaceae</taxon>
        <taxon>Acidiphilium</taxon>
    </lineage>
</organism>
<dbReference type="EC" id="2.4.99.17" evidence="1"/>
<dbReference type="EMBL" id="CP000697">
    <property type="protein sequence ID" value="ABQ30550.1"/>
    <property type="molecule type" value="Genomic_DNA"/>
</dbReference>
<dbReference type="RefSeq" id="WP_011942170.1">
    <property type="nucleotide sequence ID" value="NC_009484.1"/>
</dbReference>
<dbReference type="SMR" id="A5FY68"/>
<dbReference type="STRING" id="349163.Acry_1339"/>
<dbReference type="KEGG" id="acr:Acry_1339"/>
<dbReference type="eggNOG" id="COG0809">
    <property type="taxonomic scope" value="Bacteria"/>
</dbReference>
<dbReference type="HOGENOM" id="CLU_039110_1_1_5"/>
<dbReference type="UniPathway" id="UPA00392"/>
<dbReference type="Proteomes" id="UP000000245">
    <property type="component" value="Chromosome"/>
</dbReference>
<dbReference type="GO" id="GO:0005737">
    <property type="term" value="C:cytoplasm"/>
    <property type="evidence" value="ECO:0007669"/>
    <property type="project" value="UniProtKB-SubCell"/>
</dbReference>
<dbReference type="GO" id="GO:0051075">
    <property type="term" value="F:S-adenosylmethionine:tRNA ribosyltransferase-isomerase activity"/>
    <property type="evidence" value="ECO:0007669"/>
    <property type="project" value="UniProtKB-EC"/>
</dbReference>
<dbReference type="GO" id="GO:0008616">
    <property type="term" value="P:queuosine biosynthetic process"/>
    <property type="evidence" value="ECO:0007669"/>
    <property type="project" value="UniProtKB-UniRule"/>
</dbReference>
<dbReference type="GO" id="GO:0002099">
    <property type="term" value="P:tRNA wobble guanine modification"/>
    <property type="evidence" value="ECO:0007669"/>
    <property type="project" value="TreeGrafter"/>
</dbReference>
<dbReference type="FunFam" id="3.40.1780.10:FF:000001">
    <property type="entry name" value="S-adenosylmethionine:tRNA ribosyltransferase-isomerase"/>
    <property type="match status" value="1"/>
</dbReference>
<dbReference type="Gene3D" id="2.40.10.240">
    <property type="entry name" value="QueA-like"/>
    <property type="match status" value="1"/>
</dbReference>
<dbReference type="Gene3D" id="3.40.1780.10">
    <property type="entry name" value="QueA-like"/>
    <property type="match status" value="2"/>
</dbReference>
<dbReference type="HAMAP" id="MF_00113">
    <property type="entry name" value="QueA"/>
    <property type="match status" value="1"/>
</dbReference>
<dbReference type="InterPro" id="IPR003699">
    <property type="entry name" value="QueA"/>
</dbReference>
<dbReference type="InterPro" id="IPR042118">
    <property type="entry name" value="QueA_dom1"/>
</dbReference>
<dbReference type="InterPro" id="IPR042119">
    <property type="entry name" value="QueA_dom2"/>
</dbReference>
<dbReference type="InterPro" id="IPR036100">
    <property type="entry name" value="QueA_sf"/>
</dbReference>
<dbReference type="NCBIfam" id="NF001140">
    <property type="entry name" value="PRK00147.1"/>
    <property type="match status" value="1"/>
</dbReference>
<dbReference type="NCBIfam" id="TIGR00113">
    <property type="entry name" value="queA"/>
    <property type="match status" value="1"/>
</dbReference>
<dbReference type="PANTHER" id="PTHR30307">
    <property type="entry name" value="S-ADENOSYLMETHIONINE:TRNA RIBOSYLTRANSFERASE-ISOMERASE"/>
    <property type="match status" value="1"/>
</dbReference>
<dbReference type="PANTHER" id="PTHR30307:SF0">
    <property type="entry name" value="S-ADENOSYLMETHIONINE:TRNA RIBOSYLTRANSFERASE-ISOMERASE"/>
    <property type="match status" value="1"/>
</dbReference>
<dbReference type="Pfam" id="PF02547">
    <property type="entry name" value="Queuosine_synth"/>
    <property type="match status" value="1"/>
</dbReference>
<dbReference type="SUPFAM" id="SSF111337">
    <property type="entry name" value="QueA-like"/>
    <property type="match status" value="1"/>
</dbReference>
<protein>
    <recommendedName>
        <fullName evidence="1">S-adenosylmethionine:tRNA ribosyltransferase-isomerase</fullName>
        <ecNumber evidence="1">2.4.99.17</ecNumber>
    </recommendedName>
    <alternativeName>
        <fullName evidence="1">Queuosine biosynthesis protein QueA</fullName>
    </alternativeName>
</protein>
<comment type="function">
    <text evidence="1">Transfers and isomerizes the ribose moiety from AdoMet to the 7-aminomethyl group of 7-deazaguanine (preQ1-tRNA) to give epoxyqueuosine (oQ-tRNA).</text>
</comment>
<comment type="catalytic activity">
    <reaction evidence="1">
        <text>7-aminomethyl-7-carbaguanosine(34) in tRNA + S-adenosyl-L-methionine = epoxyqueuosine(34) in tRNA + adenine + L-methionine + 2 H(+)</text>
        <dbReference type="Rhea" id="RHEA:32155"/>
        <dbReference type="Rhea" id="RHEA-COMP:10342"/>
        <dbReference type="Rhea" id="RHEA-COMP:18582"/>
        <dbReference type="ChEBI" id="CHEBI:15378"/>
        <dbReference type="ChEBI" id="CHEBI:16708"/>
        <dbReference type="ChEBI" id="CHEBI:57844"/>
        <dbReference type="ChEBI" id="CHEBI:59789"/>
        <dbReference type="ChEBI" id="CHEBI:82833"/>
        <dbReference type="ChEBI" id="CHEBI:194443"/>
        <dbReference type="EC" id="2.4.99.17"/>
    </reaction>
</comment>
<comment type="pathway">
    <text evidence="1">tRNA modification; tRNA-queuosine biosynthesis.</text>
</comment>
<comment type="subunit">
    <text evidence="1">Monomer.</text>
</comment>
<comment type="subcellular location">
    <subcellularLocation>
        <location evidence="1">Cytoplasm</location>
    </subcellularLocation>
</comment>
<comment type="similarity">
    <text evidence="1">Belongs to the QueA family.</text>
</comment>
<proteinExistence type="inferred from homology"/>
<keyword id="KW-0963">Cytoplasm</keyword>
<keyword id="KW-0671">Queuosine biosynthesis</keyword>
<keyword id="KW-1185">Reference proteome</keyword>
<keyword id="KW-0949">S-adenosyl-L-methionine</keyword>
<keyword id="KW-0808">Transferase</keyword>
<accession>A5FY68</accession>
<reference key="1">
    <citation type="submission" date="2007-05" db="EMBL/GenBank/DDBJ databases">
        <title>Complete sequence of chromosome of Acidiphilium cryptum JF-5.</title>
        <authorList>
            <consortium name="US DOE Joint Genome Institute"/>
            <person name="Copeland A."/>
            <person name="Lucas S."/>
            <person name="Lapidus A."/>
            <person name="Barry K."/>
            <person name="Detter J.C."/>
            <person name="Glavina del Rio T."/>
            <person name="Hammon N."/>
            <person name="Israni S."/>
            <person name="Dalin E."/>
            <person name="Tice H."/>
            <person name="Pitluck S."/>
            <person name="Sims D."/>
            <person name="Brettin T."/>
            <person name="Bruce D."/>
            <person name="Han C."/>
            <person name="Schmutz J."/>
            <person name="Larimer F."/>
            <person name="Land M."/>
            <person name="Hauser L."/>
            <person name="Kyrpides N."/>
            <person name="Kim E."/>
            <person name="Magnuson T."/>
            <person name="Richardson P."/>
        </authorList>
    </citation>
    <scope>NUCLEOTIDE SEQUENCE [LARGE SCALE GENOMIC DNA]</scope>
    <source>
        <strain>JF-5</strain>
    </source>
</reference>
<sequence>MNLADFDYHLPPERIAAEPARPRHAARLLHVRGDGLDDRTILDLPALLAPGDLLVVNDTRVIPAQLTGRRGDARIGITLDRPLADGTWRVLLRNARRARPGETIAIDGAGGIAAEVIDRAPDGSATLRFDCDAETFRAMLDRAASLALPPYIPRPAGISEQDRQDYQTMFAAEEGAVAAPTAGLHFTETVLAALAARGVGLATVTLHVGAGTFLPVREDQLERHKLHAERGLIGPETAALVNATRARGGRIVAVGTTSLRVLETAAGDDGTLAPWHGETELFITPGYRFKLVDRLMTNFHLPKSTLLMLVAAFAGVERMRAAYAHAIARGYRFYSYGDASLLERA</sequence>
<feature type="chain" id="PRO_1000015169" description="S-adenosylmethionine:tRNA ribosyltransferase-isomerase">
    <location>
        <begin position="1"/>
        <end position="345"/>
    </location>
</feature>
<evidence type="ECO:0000255" key="1">
    <source>
        <dbReference type="HAMAP-Rule" id="MF_00113"/>
    </source>
</evidence>